<reference key="1">
    <citation type="journal article" date="2004" name="Biochem. Biophys. Res. Commun.">
        <title>URB expression in human bone marrow stromal cells and during mouse development.</title>
        <authorList>
            <person name="Liu Y."/>
            <person name="Monticone M."/>
            <person name="Tonachini L."/>
            <person name="Mastrogiacomo M."/>
            <person name="Marigo V."/>
            <person name="Cancedda R."/>
            <person name="Castagnola P."/>
        </authorList>
    </citation>
    <scope>NUCLEOTIDE SEQUENCE [MRNA] (ISOFORM 1)</scope>
    <scope>INDUCTION</scope>
    <scope>TISSUE SPECIFICITY</scope>
    <source>
        <tissue>Hair follicle dermal papilla</tissue>
    </source>
</reference>
<reference key="2">
    <citation type="journal article" date="2005" name="J. Biol. Chem.">
        <title>DRO1, a gene down-regulated by oncogenes, mediates growth inhibition in colon and pancreatic cancer cells.</title>
        <authorList>
            <person name="Bommer G.T."/>
            <person name="Jaeger C."/>
            <person name="Duerr E.M."/>
            <person name="Baehs S."/>
            <person name="Eichhorst S.T."/>
            <person name="Brabletz T."/>
            <person name="Hu G."/>
            <person name="Froehlich T."/>
            <person name="Arnold G."/>
            <person name="Kress D.C."/>
            <person name="Goeke B."/>
            <person name="Fearon E.R."/>
            <person name="Kolligs F.T."/>
        </authorList>
    </citation>
    <scope>NUCLEOTIDE SEQUENCE [MRNA] (ISOFORM 1)</scope>
    <scope>SUBCELLULAR LOCATION</scope>
    <scope>TISSUE SPECIFICITY</scope>
    <scope>PHOSPHORYLATION</scope>
</reference>
<reference key="3">
    <citation type="journal article" date="2005" name="J. Dermatol. Sci.">
        <title>URB expression in human dermal papilla cells.</title>
        <authorList>
            <person name="Cha S.-Y."/>
            <person name="Sung Y.K."/>
            <person name="Im S."/>
            <person name="Kwack M.H."/>
            <person name="Kim M.K."/>
            <person name="Kim J.C."/>
        </authorList>
    </citation>
    <scope>NUCLEOTIDE SEQUENCE [MRNA] (ISOFORM 1)</scope>
    <scope>TISSUE SPECIFICITY</scope>
    <scope>INDUCTION</scope>
    <source>
        <tissue>Hair follicle dermal papilla</tissue>
    </source>
</reference>
<reference key="4">
    <citation type="submission" date="2000-12" db="EMBL/GenBank/DDBJ databases">
        <title>A novel gene from human brain endothelial cell PCR select library.</title>
        <authorList>
            <person name="Yonezawa T."/>
            <person name="Ninomiya Y."/>
        </authorList>
    </citation>
    <scope>NUCLEOTIDE SEQUENCE [MRNA] (ISOFORM 1)</scope>
    <source>
        <tissue>Brain endothelium</tissue>
    </source>
</reference>
<reference key="5">
    <citation type="submission" date="2002-04" db="EMBL/GenBank/DDBJ databases">
        <authorList>
            <person name="Guo J.H."/>
            <person name="Yu L."/>
        </authorList>
    </citation>
    <scope>NUCLEOTIDE SEQUENCE [LARGE SCALE MRNA] (ISOFORM 1)</scope>
</reference>
<reference key="6">
    <citation type="journal article" date="2007" name="BMC Genomics">
        <title>The full-ORF clone resource of the German cDNA consortium.</title>
        <authorList>
            <person name="Bechtel S."/>
            <person name="Rosenfelder H."/>
            <person name="Duda A."/>
            <person name="Schmidt C.P."/>
            <person name="Ernst U."/>
            <person name="Wellenreuther R."/>
            <person name="Mehrle A."/>
            <person name="Schuster C."/>
            <person name="Bahr A."/>
            <person name="Bloecker H."/>
            <person name="Heubner D."/>
            <person name="Hoerlein A."/>
            <person name="Michel G."/>
            <person name="Wedler H."/>
            <person name="Koehrer K."/>
            <person name="Ottenwaelder B."/>
            <person name="Poustka A."/>
            <person name="Wiemann S."/>
            <person name="Schupp I."/>
        </authorList>
    </citation>
    <scope>NUCLEOTIDE SEQUENCE [LARGE SCALE MRNA] (ISOFORM 1)</scope>
    <source>
        <tissue>Colon endothelium</tissue>
        <tissue>Endometrium</tissue>
        <tissue>Stomach</tissue>
    </source>
</reference>
<reference key="7">
    <citation type="submission" date="2005-09" db="EMBL/GenBank/DDBJ databases">
        <authorList>
            <person name="Mural R.J."/>
            <person name="Istrail S."/>
            <person name="Sutton G.G."/>
            <person name="Florea L."/>
            <person name="Halpern A.L."/>
            <person name="Mobarry C.M."/>
            <person name="Lippert R."/>
            <person name="Walenz B."/>
            <person name="Shatkay H."/>
            <person name="Dew I."/>
            <person name="Miller J.R."/>
            <person name="Flanigan M.J."/>
            <person name="Edwards N.J."/>
            <person name="Bolanos R."/>
            <person name="Fasulo D."/>
            <person name="Halldorsson B.V."/>
            <person name="Hannenhalli S."/>
            <person name="Turner R."/>
            <person name="Yooseph S."/>
            <person name="Lu F."/>
            <person name="Nusskern D.R."/>
            <person name="Shue B.C."/>
            <person name="Zheng X.H."/>
            <person name="Zhong F."/>
            <person name="Delcher A.L."/>
            <person name="Huson D.H."/>
            <person name="Kravitz S.A."/>
            <person name="Mouchard L."/>
            <person name="Reinert K."/>
            <person name="Remington K.A."/>
            <person name="Clark A.G."/>
            <person name="Waterman M.S."/>
            <person name="Eichler E.E."/>
            <person name="Adams M.D."/>
            <person name="Hunkapiller M.W."/>
            <person name="Myers E.W."/>
            <person name="Venter J.C."/>
        </authorList>
    </citation>
    <scope>NUCLEOTIDE SEQUENCE [LARGE SCALE GENOMIC DNA]</scope>
</reference>
<reference key="8">
    <citation type="journal article" date="2004" name="Genome Res.">
        <title>The status, quality, and expansion of the NIH full-length cDNA project: the Mammalian Gene Collection (MGC).</title>
        <authorList>
            <consortium name="The MGC Project Team"/>
        </authorList>
    </citation>
    <scope>NUCLEOTIDE SEQUENCE [LARGE SCALE MRNA] (ISOFORMS 1 AND 3)</scope>
    <source>
        <tissue>Brain</tissue>
        <tissue>Chondrosarcoma</tissue>
        <tissue>PNS</tissue>
    </source>
</reference>
<reference key="9">
    <citation type="journal article" date="2004" name="Nat. Genet.">
        <title>Complete sequencing and characterization of 21,243 full-length human cDNAs.</title>
        <authorList>
            <person name="Ota T."/>
            <person name="Suzuki Y."/>
            <person name="Nishikawa T."/>
            <person name="Otsuki T."/>
            <person name="Sugiyama T."/>
            <person name="Irie R."/>
            <person name="Wakamatsu A."/>
            <person name="Hayashi K."/>
            <person name="Sato H."/>
            <person name="Nagai K."/>
            <person name="Kimura K."/>
            <person name="Makita H."/>
            <person name="Sekine M."/>
            <person name="Obayashi M."/>
            <person name="Nishi T."/>
            <person name="Shibahara T."/>
            <person name="Tanaka T."/>
            <person name="Ishii S."/>
            <person name="Yamamoto J."/>
            <person name="Saito K."/>
            <person name="Kawai Y."/>
            <person name="Isono Y."/>
            <person name="Nakamura Y."/>
            <person name="Nagahari K."/>
            <person name="Murakami K."/>
            <person name="Yasuda T."/>
            <person name="Iwayanagi T."/>
            <person name="Wagatsuma M."/>
            <person name="Shiratori A."/>
            <person name="Sudo H."/>
            <person name="Hosoiri T."/>
            <person name="Kaku Y."/>
            <person name="Kodaira H."/>
            <person name="Kondo H."/>
            <person name="Sugawara M."/>
            <person name="Takahashi M."/>
            <person name="Kanda K."/>
            <person name="Yokoi T."/>
            <person name="Furuya T."/>
            <person name="Kikkawa E."/>
            <person name="Omura Y."/>
            <person name="Abe K."/>
            <person name="Kamihara K."/>
            <person name="Katsuta N."/>
            <person name="Sato K."/>
            <person name="Tanikawa M."/>
            <person name="Yamazaki M."/>
            <person name="Ninomiya K."/>
            <person name="Ishibashi T."/>
            <person name="Yamashita H."/>
            <person name="Murakawa K."/>
            <person name="Fujimori K."/>
            <person name="Tanai H."/>
            <person name="Kimata M."/>
            <person name="Watanabe M."/>
            <person name="Hiraoka S."/>
            <person name="Chiba Y."/>
            <person name="Ishida S."/>
            <person name="Ono Y."/>
            <person name="Takiguchi S."/>
            <person name="Watanabe S."/>
            <person name="Yosida M."/>
            <person name="Hotuta T."/>
            <person name="Kusano J."/>
            <person name="Kanehori K."/>
            <person name="Takahashi-Fujii A."/>
            <person name="Hara H."/>
            <person name="Tanase T.-O."/>
            <person name="Nomura Y."/>
            <person name="Togiya S."/>
            <person name="Komai F."/>
            <person name="Hara R."/>
            <person name="Takeuchi K."/>
            <person name="Arita M."/>
            <person name="Imose N."/>
            <person name="Musashino K."/>
            <person name="Yuuki H."/>
            <person name="Oshima A."/>
            <person name="Sasaki N."/>
            <person name="Aotsuka S."/>
            <person name="Yoshikawa Y."/>
            <person name="Matsunawa H."/>
            <person name="Ichihara T."/>
            <person name="Shiohata N."/>
            <person name="Sano S."/>
            <person name="Moriya S."/>
            <person name="Momiyama H."/>
            <person name="Satoh N."/>
            <person name="Takami S."/>
            <person name="Terashima Y."/>
            <person name="Suzuki O."/>
            <person name="Nakagawa S."/>
            <person name="Senoh A."/>
            <person name="Mizoguchi H."/>
            <person name="Goto Y."/>
            <person name="Shimizu F."/>
            <person name="Wakebe H."/>
            <person name="Hishigaki H."/>
            <person name="Watanabe T."/>
            <person name="Sugiyama A."/>
            <person name="Takemoto M."/>
            <person name="Kawakami B."/>
            <person name="Yamazaki M."/>
            <person name="Watanabe K."/>
            <person name="Kumagai A."/>
            <person name="Itakura S."/>
            <person name="Fukuzumi Y."/>
            <person name="Fujimori Y."/>
            <person name="Komiyama M."/>
            <person name="Tashiro H."/>
            <person name="Tanigami A."/>
            <person name="Fujiwara T."/>
            <person name="Ono T."/>
            <person name="Yamada K."/>
            <person name="Fujii Y."/>
            <person name="Ozaki K."/>
            <person name="Hirao M."/>
            <person name="Ohmori Y."/>
            <person name="Kawabata A."/>
            <person name="Hikiji T."/>
            <person name="Kobatake N."/>
            <person name="Inagaki H."/>
            <person name="Ikema Y."/>
            <person name="Okamoto S."/>
            <person name="Okitani R."/>
            <person name="Kawakami T."/>
            <person name="Noguchi S."/>
            <person name="Itoh T."/>
            <person name="Shigeta K."/>
            <person name="Senba T."/>
            <person name="Matsumura K."/>
            <person name="Nakajima Y."/>
            <person name="Mizuno T."/>
            <person name="Morinaga M."/>
            <person name="Sasaki M."/>
            <person name="Togashi T."/>
            <person name="Oyama M."/>
            <person name="Hata H."/>
            <person name="Watanabe M."/>
            <person name="Komatsu T."/>
            <person name="Mizushima-Sugano J."/>
            <person name="Satoh T."/>
            <person name="Shirai Y."/>
            <person name="Takahashi Y."/>
            <person name="Nakagawa K."/>
            <person name="Okumura K."/>
            <person name="Nagase T."/>
            <person name="Nomura N."/>
            <person name="Kikuchi H."/>
            <person name="Masuho Y."/>
            <person name="Yamashita R."/>
            <person name="Nakai K."/>
            <person name="Yada T."/>
            <person name="Nakamura Y."/>
            <person name="Ohara O."/>
            <person name="Isogai T."/>
            <person name="Sugano S."/>
        </authorList>
    </citation>
    <scope>NUCLEOTIDE SEQUENCE [LARGE SCALE MRNA] OF 1-583 (ISOFORM 2)</scope>
    <source>
        <tissue>Placenta</tissue>
    </source>
</reference>
<reference key="10">
    <citation type="journal article" date="2014" name="Nat. Struct. Mol. Biol.">
        <title>Uncovering global SUMOylation signaling networks in a site-specific manner.</title>
        <authorList>
            <person name="Hendriks I.A."/>
            <person name="D'Souza R.C."/>
            <person name="Yang B."/>
            <person name="Verlaan-de Vries M."/>
            <person name="Mann M."/>
            <person name="Vertegaal A.C."/>
        </authorList>
    </citation>
    <scope>SUMOYLATION [LARGE SCALE ANALYSIS] AT LYS-545 AND LYS-548</scope>
    <scope>IDENTIFICATION BY MASS SPECTROMETRY [LARGE SCALE ANALYSIS]</scope>
</reference>
<gene>
    <name type="primary">CCDC80</name>
    <name type="synonym">DRO1</name>
    <name type="synonym">URB</name>
    <name type="ORF">HBE245</name>
</gene>
<accession>Q76M96</accession>
<accession>D3DN67</accession>
<accession>Q5PR20</accession>
<accession>Q6GPG9</accession>
<accession>Q8IVT6</accession>
<accession>Q8NBV1</accession>
<accession>Q8NHY8</accession>
<comment type="function">
    <text evidence="1">Promotes cell adhesion and matrix assembly.</text>
</comment>
<comment type="subunit">
    <text evidence="1">Binds to various extracellular matrix proteins.</text>
</comment>
<comment type="subcellular location">
    <subcellularLocation>
        <location evidence="1">Secreted</location>
        <location evidence="1">Extracellular space</location>
        <location evidence="1">Extracellular matrix</location>
    </subcellularLocation>
</comment>
<comment type="alternative products">
    <event type="alternative splicing"/>
    <isoform>
        <id>Q76M96-1</id>
        <name>1</name>
        <sequence type="displayed"/>
    </isoform>
    <isoform>
        <id>Q76M96-2</id>
        <name>2</name>
        <sequence type="described" ref="VSP_024136"/>
    </isoform>
    <isoform>
        <id>Q76M96-3</id>
        <name>3</name>
        <sequence type="described" ref="VSP_024135"/>
    </isoform>
</comment>
<comment type="tissue specificity">
    <text evidence="4 5 6">Expressed in dermal papilla and dermal fibroblasts (at protein level). Expressed in heart, thymus, placenta, pancreas, colon, epithelium, spleen and osteoblasts.</text>
</comment>
<comment type="induction">
    <text evidence="4 6">Down-regulated in cancer and after osteoblastic differentiation. Up-regulated by dihydrotestosterone (DHT).</text>
</comment>
<comment type="PTM">
    <text evidence="5">Phosphorylated.</text>
</comment>
<comment type="similarity">
    <text evidence="9">Belongs to the CCDC80 family.</text>
</comment>
<protein>
    <recommendedName>
        <fullName>Coiled-coil domain-containing protein 80</fullName>
    </recommendedName>
    <alternativeName>
        <fullName>Down-regulated by oncogenes protein 1</fullName>
    </alternativeName>
    <alternativeName>
        <fullName>Up-regulated in BRS-3 deficient mouse homolog</fullName>
    </alternativeName>
</protein>
<name>CCD80_HUMAN</name>
<proteinExistence type="evidence at protein level"/>
<evidence type="ECO:0000250" key="1"/>
<evidence type="ECO:0000255" key="2"/>
<evidence type="ECO:0000256" key="3">
    <source>
        <dbReference type="SAM" id="MobiDB-lite"/>
    </source>
</evidence>
<evidence type="ECO:0000269" key="4">
    <source>
    </source>
</evidence>
<evidence type="ECO:0000269" key="5">
    <source>
    </source>
</evidence>
<evidence type="ECO:0000269" key="6">
    <source>
    </source>
</evidence>
<evidence type="ECO:0000303" key="7">
    <source>
    </source>
</evidence>
<evidence type="ECO:0000303" key="8">
    <source>
    </source>
</evidence>
<evidence type="ECO:0000305" key="9"/>
<evidence type="ECO:0007744" key="10">
    <source>
    </source>
</evidence>
<dbReference type="EMBL" id="AY333429">
    <property type="protein sequence ID" value="AAQ96742.1"/>
    <property type="molecule type" value="mRNA"/>
</dbReference>
<dbReference type="EMBL" id="AY548106">
    <property type="protein sequence ID" value="AAS66643.1"/>
    <property type="molecule type" value="mRNA"/>
</dbReference>
<dbReference type="EMBL" id="AY548107">
    <property type="protein sequence ID" value="AAS66644.1"/>
    <property type="molecule type" value="mRNA"/>
</dbReference>
<dbReference type="EMBL" id="AY526612">
    <property type="protein sequence ID" value="AAS92235.1"/>
    <property type="molecule type" value="mRNA"/>
</dbReference>
<dbReference type="EMBL" id="AB052098">
    <property type="protein sequence ID" value="BAD05134.1"/>
    <property type="molecule type" value="mRNA"/>
</dbReference>
<dbReference type="EMBL" id="AF506819">
    <property type="protein sequence ID" value="AAM33633.1"/>
    <property type="molecule type" value="mRNA"/>
</dbReference>
<dbReference type="EMBL" id="BX647817">
    <property type="protein sequence ID" value="CAH56167.1"/>
    <property type="molecule type" value="mRNA"/>
</dbReference>
<dbReference type="EMBL" id="BX647117">
    <property type="protein sequence ID" value="CAH56178.1"/>
    <property type="molecule type" value="mRNA"/>
</dbReference>
<dbReference type="EMBL" id="AL833034">
    <property type="protein sequence ID" value="CAH56325.1"/>
    <property type="molecule type" value="mRNA"/>
</dbReference>
<dbReference type="EMBL" id="CH471052">
    <property type="protein sequence ID" value="EAW79663.1"/>
    <property type="molecule type" value="Genomic_DNA"/>
</dbReference>
<dbReference type="EMBL" id="CH471052">
    <property type="protein sequence ID" value="EAW79665.1"/>
    <property type="molecule type" value="Genomic_DNA"/>
</dbReference>
<dbReference type="EMBL" id="BC042105">
    <property type="protein sequence ID" value="AAH42105.1"/>
    <property type="molecule type" value="mRNA"/>
</dbReference>
<dbReference type="EMBL" id="BC073164">
    <property type="protein sequence ID" value="AAH73164.1"/>
    <property type="molecule type" value="mRNA"/>
</dbReference>
<dbReference type="EMBL" id="BC086876">
    <property type="protein sequence ID" value="AAH86876.1"/>
    <property type="molecule type" value="mRNA"/>
</dbReference>
<dbReference type="EMBL" id="BC110842">
    <property type="protein sequence ID" value="AAI10843.1"/>
    <property type="molecule type" value="mRNA"/>
</dbReference>
<dbReference type="EMBL" id="BC116178">
    <property type="protein sequence ID" value="AAI16179.1"/>
    <property type="molecule type" value="mRNA"/>
</dbReference>
<dbReference type="EMBL" id="AK075210">
    <property type="protein sequence ID" value="BAC11475.1"/>
    <property type="molecule type" value="mRNA"/>
</dbReference>
<dbReference type="CCDS" id="CCDS2968.1">
    <molecule id="Q76M96-1"/>
</dbReference>
<dbReference type="RefSeq" id="NP_955805.1">
    <molecule id="Q76M96-1"/>
    <property type="nucleotide sequence ID" value="NM_199511.3"/>
</dbReference>
<dbReference type="RefSeq" id="NP_955806.1">
    <molecule id="Q76M96-1"/>
    <property type="nucleotide sequence ID" value="NM_199512.3"/>
</dbReference>
<dbReference type="RefSeq" id="XP_047303451.1">
    <molecule id="Q76M96-2"/>
    <property type="nucleotide sequence ID" value="XM_047447495.1"/>
</dbReference>
<dbReference type="SMR" id="Q76M96"/>
<dbReference type="BioGRID" id="127410">
    <property type="interactions" value="10"/>
</dbReference>
<dbReference type="FunCoup" id="Q76M96">
    <property type="interactions" value="56"/>
</dbReference>
<dbReference type="IntAct" id="Q76M96">
    <property type="interactions" value="7"/>
</dbReference>
<dbReference type="STRING" id="9606.ENSP00000206423"/>
<dbReference type="GlyConnect" id="1124">
    <property type="glycosylation" value="3 N-Linked glycans (2 sites)"/>
</dbReference>
<dbReference type="GlyCosmos" id="Q76M96">
    <property type="glycosylation" value="3 sites, 3 glycans"/>
</dbReference>
<dbReference type="GlyGen" id="Q76M96">
    <property type="glycosylation" value="17 sites, 4 N-linked glycans (2 sites), 3 O-linked glycans (13 sites)"/>
</dbReference>
<dbReference type="iPTMnet" id="Q76M96"/>
<dbReference type="PhosphoSitePlus" id="Q76M96"/>
<dbReference type="BioMuta" id="CCDC80"/>
<dbReference type="DMDM" id="74712933"/>
<dbReference type="jPOST" id="Q76M96"/>
<dbReference type="MassIVE" id="Q76M96"/>
<dbReference type="PaxDb" id="9606-ENSP00000206423"/>
<dbReference type="PeptideAtlas" id="Q76M96"/>
<dbReference type="ProteomicsDB" id="68685">
    <molecule id="Q76M96-1"/>
</dbReference>
<dbReference type="ProteomicsDB" id="68686">
    <molecule id="Q76M96-2"/>
</dbReference>
<dbReference type="ProteomicsDB" id="68687">
    <molecule id="Q76M96-3"/>
</dbReference>
<dbReference type="Pumba" id="Q76M96"/>
<dbReference type="Antibodypedia" id="966">
    <property type="antibodies" value="101 antibodies from 16 providers"/>
</dbReference>
<dbReference type="DNASU" id="151887"/>
<dbReference type="Ensembl" id="ENST00000206423.8">
    <molecule id="Q76M96-1"/>
    <property type="protein sequence ID" value="ENSP00000206423.3"/>
    <property type="gene ID" value="ENSG00000091986.16"/>
</dbReference>
<dbReference type="Ensembl" id="ENST00000439685.6">
    <molecule id="Q76M96-1"/>
    <property type="protein sequence ID" value="ENSP00000411814.2"/>
    <property type="gene ID" value="ENSG00000091986.16"/>
</dbReference>
<dbReference type="GeneID" id="151887"/>
<dbReference type="KEGG" id="hsa:151887"/>
<dbReference type="MANE-Select" id="ENST00000206423.8">
    <property type="protein sequence ID" value="ENSP00000206423.3"/>
    <property type="RefSeq nucleotide sequence ID" value="NM_199511.3"/>
    <property type="RefSeq protein sequence ID" value="NP_955805.1"/>
</dbReference>
<dbReference type="UCSC" id="uc003dzf.5">
    <molecule id="Q76M96-1"/>
    <property type="organism name" value="human"/>
</dbReference>
<dbReference type="AGR" id="HGNC:30649"/>
<dbReference type="CTD" id="151887"/>
<dbReference type="DisGeNET" id="151887"/>
<dbReference type="GeneCards" id="CCDC80"/>
<dbReference type="HGNC" id="HGNC:30649">
    <property type="gene designation" value="CCDC80"/>
</dbReference>
<dbReference type="HPA" id="ENSG00000091986">
    <property type="expression patterns" value="Low tissue specificity"/>
</dbReference>
<dbReference type="MIM" id="608298">
    <property type="type" value="gene"/>
</dbReference>
<dbReference type="neXtProt" id="NX_Q76M96"/>
<dbReference type="OpenTargets" id="ENSG00000091986"/>
<dbReference type="PharmGKB" id="PA144596470"/>
<dbReference type="VEuPathDB" id="HostDB:ENSG00000091986"/>
<dbReference type="eggNOG" id="ENOG502QRG7">
    <property type="taxonomic scope" value="Eukaryota"/>
</dbReference>
<dbReference type="GeneTree" id="ENSGT00940000161699"/>
<dbReference type="HOGENOM" id="CLU_013508_0_0_1"/>
<dbReference type="InParanoid" id="Q76M96"/>
<dbReference type="OMA" id="DMRVKQY"/>
<dbReference type="OrthoDB" id="9898686at2759"/>
<dbReference type="PAN-GO" id="Q76M96">
    <property type="GO annotations" value="3 GO annotations based on evolutionary models"/>
</dbReference>
<dbReference type="PhylomeDB" id="Q76M96"/>
<dbReference type="TreeFam" id="TF332926"/>
<dbReference type="PathwayCommons" id="Q76M96"/>
<dbReference type="SignaLink" id="Q76M96"/>
<dbReference type="BioGRID-ORCS" id="151887">
    <property type="hits" value="12 hits in 1154 CRISPR screens"/>
</dbReference>
<dbReference type="ChiTaRS" id="CCDC80">
    <property type="organism name" value="human"/>
</dbReference>
<dbReference type="GeneWiki" id="CCDC80"/>
<dbReference type="GenomeRNAi" id="151887"/>
<dbReference type="Pharos" id="Q76M96">
    <property type="development level" value="Tbio"/>
</dbReference>
<dbReference type="PRO" id="PR:Q76M96"/>
<dbReference type="Proteomes" id="UP000005640">
    <property type="component" value="Chromosome 3"/>
</dbReference>
<dbReference type="RNAct" id="Q76M96">
    <property type="molecule type" value="protein"/>
</dbReference>
<dbReference type="Bgee" id="ENSG00000091986">
    <property type="expression patterns" value="Expressed in parietal pleura and 174 other cell types or tissues"/>
</dbReference>
<dbReference type="ExpressionAtlas" id="Q76M96">
    <property type="expression patterns" value="baseline and differential"/>
</dbReference>
<dbReference type="GO" id="GO:0005604">
    <property type="term" value="C:basement membrane"/>
    <property type="evidence" value="ECO:0000318"/>
    <property type="project" value="GO_Central"/>
</dbReference>
<dbReference type="GO" id="GO:0005576">
    <property type="term" value="C:extracellular region"/>
    <property type="evidence" value="ECO:0007669"/>
    <property type="project" value="UniProtKB-KW"/>
</dbReference>
<dbReference type="GO" id="GO:0005614">
    <property type="term" value="C:interstitial matrix"/>
    <property type="evidence" value="ECO:0007669"/>
    <property type="project" value="Ensembl"/>
</dbReference>
<dbReference type="GO" id="GO:0001968">
    <property type="term" value="F:fibronectin binding"/>
    <property type="evidence" value="ECO:0007669"/>
    <property type="project" value="Ensembl"/>
</dbReference>
<dbReference type="GO" id="GO:0008201">
    <property type="term" value="F:heparin binding"/>
    <property type="evidence" value="ECO:0007669"/>
    <property type="project" value="Ensembl"/>
</dbReference>
<dbReference type="GO" id="GO:0030198">
    <property type="term" value="P:extracellular matrix organization"/>
    <property type="evidence" value="ECO:0000318"/>
    <property type="project" value="GO_Central"/>
</dbReference>
<dbReference type="GO" id="GO:0010811">
    <property type="term" value="P:positive regulation of cell-substrate adhesion"/>
    <property type="evidence" value="ECO:0000318"/>
    <property type="project" value="GO_Central"/>
</dbReference>
<dbReference type="GO" id="GO:0009617">
    <property type="term" value="P:response to bacterium"/>
    <property type="evidence" value="ECO:0007669"/>
    <property type="project" value="Ensembl"/>
</dbReference>
<dbReference type="InterPro" id="IPR025232">
    <property type="entry name" value="DUF4174"/>
</dbReference>
<dbReference type="PANTHER" id="PTHR46792">
    <property type="entry name" value="COILED-COIL DOMAIN-CONTAINING PROTEIN 80"/>
    <property type="match status" value="1"/>
</dbReference>
<dbReference type="PANTHER" id="PTHR46792:SF2">
    <property type="entry name" value="COILED-COIL DOMAIN-CONTAINING PROTEIN 80"/>
    <property type="match status" value="1"/>
</dbReference>
<dbReference type="Pfam" id="PF13778">
    <property type="entry name" value="DUF4174"/>
    <property type="match status" value="3"/>
</dbReference>
<feature type="signal peptide" evidence="2">
    <location>
        <begin position="1"/>
        <end position="21"/>
    </location>
</feature>
<feature type="chain" id="PRO_0000282418" description="Coiled-coil domain-containing protein 80">
    <location>
        <begin position="22"/>
        <end position="950"/>
    </location>
</feature>
<feature type="region of interest" description="Disordered" evidence="3">
    <location>
        <begin position="28"/>
        <end position="64"/>
    </location>
</feature>
<feature type="region of interest" description="Disordered" evidence="3">
    <location>
        <begin position="88"/>
        <end position="119"/>
    </location>
</feature>
<feature type="region of interest" description="Disordered" evidence="3">
    <location>
        <begin position="289"/>
        <end position="609"/>
    </location>
</feature>
<feature type="coiled-coil region" evidence="2">
    <location>
        <begin position="560"/>
        <end position="587"/>
    </location>
</feature>
<feature type="compositionally biased region" description="Basic and acidic residues" evidence="3">
    <location>
        <begin position="104"/>
        <end position="119"/>
    </location>
</feature>
<feature type="compositionally biased region" description="Basic and acidic residues" evidence="3">
    <location>
        <begin position="308"/>
        <end position="317"/>
    </location>
</feature>
<feature type="compositionally biased region" description="Low complexity" evidence="3">
    <location>
        <begin position="348"/>
        <end position="374"/>
    </location>
</feature>
<feature type="compositionally biased region" description="Polar residues" evidence="3">
    <location>
        <begin position="376"/>
        <end position="385"/>
    </location>
</feature>
<feature type="compositionally biased region" description="Basic and acidic residues" evidence="3">
    <location>
        <begin position="418"/>
        <end position="428"/>
    </location>
</feature>
<feature type="compositionally biased region" description="Polar residues" evidence="3">
    <location>
        <begin position="435"/>
        <end position="454"/>
    </location>
</feature>
<feature type="compositionally biased region" description="Basic and acidic residues" evidence="3">
    <location>
        <begin position="462"/>
        <end position="478"/>
    </location>
</feature>
<feature type="compositionally biased region" description="Basic and acidic residues" evidence="3">
    <location>
        <begin position="487"/>
        <end position="499"/>
    </location>
</feature>
<feature type="compositionally biased region" description="Basic and acidic residues" evidence="3">
    <location>
        <begin position="538"/>
        <end position="582"/>
    </location>
</feature>
<feature type="compositionally biased region" description="Polar residues" evidence="3">
    <location>
        <begin position="598"/>
        <end position="609"/>
    </location>
</feature>
<feature type="cross-link" description="Glycyl lysine isopeptide (Lys-Gly) (interchain with G-Cter in SUMO2)" evidence="10">
    <location>
        <position position="545"/>
    </location>
</feature>
<feature type="cross-link" description="Glycyl lysine isopeptide (Lys-Gly) (interchain with G-Cter in SUMO2)" evidence="10">
    <location>
        <position position="548"/>
    </location>
</feature>
<feature type="splice variant" id="VSP_024135" description="In isoform 3." evidence="8">
    <location>
        <begin position="1"/>
        <end position="865"/>
    </location>
</feature>
<feature type="splice variant" id="VSP_024136" description="In isoform 2." evidence="7">
    <original>M</original>
    <variation>MTSVHRKVDYTM</variation>
    <location>
        <position position="1"/>
    </location>
</feature>
<feature type="sequence conflict" description="In Ref. 9; BAC11475." evidence="9" ref="9">
    <original>S</original>
    <variation>L</variation>
    <location>
        <position position="411"/>
    </location>
</feature>
<feature type="sequence conflict" description="In Ref. 8; AAH86876." evidence="9" ref="8">
    <original>E</original>
    <variation>K</variation>
    <location>
        <position position="549"/>
    </location>
</feature>
<feature type="sequence conflict" description="In Ref. 8; AAH86876." evidence="9" ref="8">
    <original>K</original>
    <variation>E</variation>
    <location>
        <position position="551"/>
    </location>
</feature>
<feature type="sequence conflict" description="In Ref. 8; AAH73164." evidence="9" ref="8">
    <original>S</original>
    <variation>G</variation>
    <location>
        <position position="837"/>
    </location>
</feature>
<sequence length="950" mass="108174">MTWRMGPRFTMLLAMWLVCGSEPHPHATIRGSHGGRKVPLVSPDSSRPARFLRHTGRSRGIERSTLEEPNLQPLQRRRSVPVLRLARPTEPPARSDINGAAVRPEQRPAARGSPREMIRDEGSSARSRMLRFPSGSSSPNILASFAGKNRVWVISAPHASEGYYRLMMSLLKDDVYCELAERHIQQIVLFHQAGEEGGKVRRITSEGQILEQPLDPSLIPKLMSFLKLEKGKFGMVLLKKTLQVEERYPYPVRLEAMYEVIDQGPIRRIEKIRQKGFVQKCKASGVEGQVVAEGNDGGGGAGRPSLGSEKKKEDPRRAQVPPTRESRVKVLRKLAATAPALPQPPSTPRATTLPPAPATTVTRSTSRAVTVAARPMTTTAFPTTQRPWTPSPSHRPPTTTEVITARRPSVSENLYPPSRKDQHRERPQTTRRPSKATSLESFTNAPPTTISEPSTRAAGPGRFRDNRMDRREHGHRDPNVVPGPPKPAKEKPPKKKAQDKILSNEYEEKYDLSRPTASQLEDELQVGNVPLKKAKESKKHEKLEKPEKEKKKKMKNENADKLLKSEKQMKKSEKKSKQEKEKSKKKKGGKTEQDGYQKPTNKHFTQSPKKSVADLLGSFEGKRRLLLITAPKAENNMYVQQRDEYLESFCKMATRKISVITIFGPVNNSTMKIDHFQLDNEKPMRVVDDEDLVDQRLISELRKEYGMTYNDFFMVLTDVDLRVKQYYEVPITMKSVFDLIDTFQSRIKDMEKQKKEGIVCKEDKKQSLENFLSRFRWRRRLLVISAPNDEDWAYSQQLSALSGQACNFGLRHITILKLLGVGEEVGGVLELFPINGSSVVEREDVPAHLVKDIRNYFQVSPEYFSMLLVGKDGNVKSWYPSPMWSMVIVYDLIDSMQLRRQEMAIQQSLGMRCPEDEYAGYGYHSYHQGYQDGYQDDYRHHESYHHGYPY</sequence>
<keyword id="KW-0025">Alternative splicing</keyword>
<keyword id="KW-0175">Coiled coil</keyword>
<keyword id="KW-0272">Extracellular matrix</keyword>
<keyword id="KW-1017">Isopeptide bond</keyword>
<keyword id="KW-0597">Phosphoprotein</keyword>
<keyword id="KW-1267">Proteomics identification</keyword>
<keyword id="KW-1185">Reference proteome</keyword>
<keyword id="KW-0964">Secreted</keyword>
<keyword id="KW-0732">Signal</keyword>
<keyword id="KW-0832">Ubl conjugation</keyword>
<organism>
    <name type="scientific">Homo sapiens</name>
    <name type="common">Human</name>
    <dbReference type="NCBI Taxonomy" id="9606"/>
    <lineage>
        <taxon>Eukaryota</taxon>
        <taxon>Metazoa</taxon>
        <taxon>Chordata</taxon>
        <taxon>Craniata</taxon>
        <taxon>Vertebrata</taxon>
        <taxon>Euteleostomi</taxon>
        <taxon>Mammalia</taxon>
        <taxon>Eutheria</taxon>
        <taxon>Euarchontoglires</taxon>
        <taxon>Primates</taxon>
        <taxon>Haplorrhini</taxon>
        <taxon>Catarrhini</taxon>
        <taxon>Hominidae</taxon>
        <taxon>Homo</taxon>
    </lineage>
</organism>